<comment type="function">
    <text evidence="1">Removes the pyruvyl group from chorismate, with concomitant aromatization of the ring, to provide 4-hydroxybenzoate (4HB) for the ubiquinone pathway.</text>
</comment>
<comment type="catalytic activity">
    <reaction evidence="1">
        <text>chorismate = 4-hydroxybenzoate + pyruvate</text>
        <dbReference type="Rhea" id="RHEA:16505"/>
        <dbReference type="ChEBI" id="CHEBI:15361"/>
        <dbReference type="ChEBI" id="CHEBI:17879"/>
        <dbReference type="ChEBI" id="CHEBI:29748"/>
        <dbReference type="EC" id="4.1.3.40"/>
    </reaction>
</comment>
<comment type="pathway">
    <text evidence="1">Cofactor biosynthesis; ubiquinone biosynthesis.</text>
</comment>
<comment type="subunit">
    <text evidence="1">Monomer.</text>
</comment>
<comment type="subcellular location">
    <subcellularLocation>
        <location evidence="1">Cytoplasm</location>
    </subcellularLocation>
</comment>
<comment type="similarity">
    <text evidence="1">Belongs to the UbiC family.</text>
</comment>
<feature type="chain" id="PRO_1000186527" description="Chorismate pyruvate-lyase">
    <location>
        <begin position="1"/>
        <end position="165"/>
    </location>
</feature>
<feature type="binding site" evidence="1">
    <location>
        <position position="35"/>
    </location>
    <ligand>
        <name>substrate</name>
    </ligand>
</feature>
<feature type="binding site" evidence="1">
    <location>
        <position position="77"/>
    </location>
    <ligand>
        <name>substrate</name>
    </ligand>
</feature>
<feature type="binding site" evidence="1">
    <location>
        <position position="115"/>
    </location>
    <ligand>
        <name>substrate</name>
    </ligand>
</feature>
<feature type="binding site" evidence="1">
    <location>
        <position position="156"/>
    </location>
    <ligand>
        <name>substrate</name>
    </ligand>
</feature>
<organism>
    <name type="scientific">Escherichia coli (strain SMS-3-5 / SECEC)</name>
    <dbReference type="NCBI Taxonomy" id="439855"/>
    <lineage>
        <taxon>Bacteria</taxon>
        <taxon>Pseudomonadati</taxon>
        <taxon>Pseudomonadota</taxon>
        <taxon>Gammaproteobacteria</taxon>
        <taxon>Enterobacterales</taxon>
        <taxon>Enterobacteriaceae</taxon>
        <taxon>Escherichia</taxon>
    </lineage>
</organism>
<accession>B1LPK4</accession>
<dbReference type="EC" id="4.1.3.40" evidence="1"/>
<dbReference type="EMBL" id="CP000970">
    <property type="protein sequence ID" value="ACB16918.1"/>
    <property type="molecule type" value="Genomic_DNA"/>
</dbReference>
<dbReference type="RefSeq" id="WP_001295693.1">
    <property type="nucleotide sequence ID" value="NC_010498.1"/>
</dbReference>
<dbReference type="SMR" id="B1LPK4"/>
<dbReference type="KEGG" id="ecm:EcSMS35_4501"/>
<dbReference type="HOGENOM" id="CLU_096824_1_0_6"/>
<dbReference type="UniPathway" id="UPA00232"/>
<dbReference type="Proteomes" id="UP000007011">
    <property type="component" value="Chromosome"/>
</dbReference>
<dbReference type="GO" id="GO:0005829">
    <property type="term" value="C:cytosol"/>
    <property type="evidence" value="ECO:0007669"/>
    <property type="project" value="TreeGrafter"/>
</dbReference>
<dbReference type="GO" id="GO:0008813">
    <property type="term" value="F:chorismate lyase activity"/>
    <property type="evidence" value="ECO:0007669"/>
    <property type="project" value="UniProtKB-UniRule"/>
</dbReference>
<dbReference type="GO" id="GO:0042866">
    <property type="term" value="P:pyruvate biosynthetic process"/>
    <property type="evidence" value="ECO:0007669"/>
    <property type="project" value="UniProtKB-UniRule"/>
</dbReference>
<dbReference type="GO" id="GO:0006744">
    <property type="term" value="P:ubiquinone biosynthetic process"/>
    <property type="evidence" value="ECO:0007669"/>
    <property type="project" value="UniProtKB-UniRule"/>
</dbReference>
<dbReference type="FunFam" id="3.40.1410.10:FF:000002">
    <property type="entry name" value="Chorismate pyruvate-lyase"/>
    <property type="match status" value="1"/>
</dbReference>
<dbReference type="Gene3D" id="3.40.1410.10">
    <property type="entry name" value="Chorismate lyase-like"/>
    <property type="match status" value="1"/>
</dbReference>
<dbReference type="HAMAP" id="MF_01632">
    <property type="entry name" value="UbiC"/>
    <property type="match status" value="1"/>
</dbReference>
<dbReference type="InterPro" id="IPR007440">
    <property type="entry name" value="Chorismate--pyruvate_lyase"/>
</dbReference>
<dbReference type="InterPro" id="IPR028978">
    <property type="entry name" value="Chorismate_lyase_/UTRA_dom_sf"/>
</dbReference>
<dbReference type="NCBIfam" id="NF008656">
    <property type="entry name" value="PRK11655.1"/>
    <property type="match status" value="1"/>
</dbReference>
<dbReference type="PANTHER" id="PTHR38683">
    <property type="entry name" value="CHORISMATE PYRUVATE-LYASE"/>
    <property type="match status" value="1"/>
</dbReference>
<dbReference type="PANTHER" id="PTHR38683:SF1">
    <property type="entry name" value="CHORISMATE PYRUVATE-LYASE"/>
    <property type="match status" value="1"/>
</dbReference>
<dbReference type="Pfam" id="PF04345">
    <property type="entry name" value="Chor_lyase"/>
    <property type="match status" value="1"/>
</dbReference>
<dbReference type="SUPFAM" id="SSF64288">
    <property type="entry name" value="Chorismate lyase-like"/>
    <property type="match status" value="1"/>
</dbReference>
<sequence>MSHPALTQLRALRYFKEIPALDPQLLDWLLLEDSMTKRFEQQGKTVSVTMIREGFVEQNEIPEELPLLPKESRYWLREILLCADGEPWLAGRTVVPVSTLSGPELALQKLGKTPLGRYLFTSSTLTRDFIEIGRDAGLWGRRSRLRLSGKPLLLTELFLPASPLY</sequence>
<keyword id="KW-0963">Cytoplasm</keyword>
<keyword id="KW-0456">Lyase</keyword>
<keyword id="KW-0670">Pyruvate</keyword>
<keyword id="KW-0831">Ubiquinone biosynthesis</keyword>
<reference key="1">
    <citation type="journal article" date="2008" name="J. Bacteriol.">
        <title>Insights into the environmental resistance gene pool from the genome sequence of the multidrug-resistant environmental isolate Escherichia coli SMS-3-5.</title>
        <authorList>
            <person name="Fricke W.F."/>
            <person name="Wright M.S."/>
            <person name="Lindell A.H."/>
            <person name="Harkins D.M."/>
            <person name="Baker-Austin C."/>
            <person name="Ravel J."/>
            <person name="Stepanauskas R."/>
        </authorList>
    </citation>
    <scope>NUCLEOTIDE SEQUENCE [LARGE SCALE GENOMIC DNA]</scope>
    <source>
        <strain>SMS-3-5 / SECEC</strain>
    </source>
</reference>
<protein>
    <recommendedName>
        <fullName evidence="1">Chorismate pyruvate-lyase</fullName>
        <shortName evidence="1">CL</shortName>
        <shortName evidence="1">CPL</shortName>
        <ecNumber evidence="1">4.1.3.40</ecNumber>
    </recommendedName>
</protein>
<gene>
    <name evidence="1" type="primary">ubiC</name>
    <name type="ordered locus">EcSMS35_4501</name>
</gene>
<name>UBIC_ECOSM</name>
<proteinExistence type="inferred from homology"/>
<evidence type="ECO:0000255" key="1">
    <source>
        <dbReference type="HAMAP-Rule" id="MF_01632"/>
    </source>
</evidence>